<accession>B1IAN9</accession>
<organism>
    <name type="scientific">Streptococcus pneumoniae (strain Hungary19A-6)</name>
    <dbReference type="NCBI Taxonomy" id="487214"/>
    <lineage>
        <taxon>Bacteria</taxon>
        <taxon>Bacillati</taxon>
        <taxon>Bacillota</taxon>
        <taxon>Bacilli</taxon>
        <taxon>Lactobacillales</taxon>
        <taxon>Streptococcaceae</taxon>
        <taxon>Streptococcus</taxon>
    </lineage>
</organism>
<evidence type="ECO:0000255" key="1">
    <source>
        <dbReference type="HAMAP-Rule" id="MF_00228"/>
    </source>
</evidence>
<gene>
    <name evidence="1" type="primary">thiM1</name>
    <name type="ordered locus">SPH_0804</name>
</gene>
<reference key="1">
    <citation type="journal article" date="2010" name="Genome Biol.">
        <title>Structure and dynamics of the pan-genome of Streptococcus pneumoniae and closely related species.</title>
        <authorList>
            <person name="Donati C."/>
            <person name="Hiller N.L."/>
            <person name="Tettelin H."/>
            <person name="Muzzi A."/>
            <person name="Croucher N.J."/>
            <person name="Angiuoli S.V."/>
            <person name="Oggioni M."/>
            <person name="Dunning Hotopp J.C."/>
            <person name="Hu F.Z."/>
            <person name="Riley D.R."/>
            <person name="Covacci A."/>
            <person name="Mitchell T.J."/>
            <person name="Bentley S.D."/>
            <person name="Kilian M."/>
            <person name="Ehrlich G.D."/>
            <person name="Rappuoli R."/>
            <person name="Moxon E.R."/>
            <person name="Masignani V."/>
        </authorList>
    </citation>
    <scope>NUCLEOTIDE SEQUENCE [LARGE SCALE GENOMIC DNA]</scope>
    <source>
        <strain>Hungary19A-6</strain>
    </source>
</reference>
<sequence>MTSLKLLKEKAPLVICITNDVVKNFTANGLVALGASPAMSEFPADLEDLLKYAGGLLINIGTLTDENWKLYQAALKIAEKYNVPAVLDPVACGAGEYRKKVADDLINNYKLAAIRGNAGEIASLVGIDVASKGVDSAGVDNIDEIALAANEKFNIPIVVTGEVDAIAVNGEVVTIHNGSAMMPKVIGTGCLLGAVVASFIGLEKGQELKSLETAMLVYNIAGEIAEKHPNGHLPGTFKVEFINALYEITDEDVKEFKRVK</sequence>
<protein>
    <recommendedName>
        <fullName evidence="1">Hydroxyethylthiazole kinase 1</fullName>
        <ecNumber evidence="1">2.7.1.50</ecNumber>
    </recommendedName>
    <alternativeName>
        <fullName evidence="1">4-methyl-5-beta-hydroxyethylthiazole kinase 1</fullName>
        <shortName evidence="1">TH kinase 1</shortName>
        <shortName evidence="1">Thz kinase 1</shortName>
    </alternativeName>
</protein>
<keyword id="KW-0067">ATP-binding</keyword>
<keyword id="KW-0418">Kinase</keyword>
<keyword id="KW-0460">Magnesium</keyword>
<keyword id="KW-0479">Metal-binding</keyword>
<keyword id="KW-0547">Nucleotide-binding</keyword>
<keyword id="KW-0784">Thiamine biosynthesis</keyword>
<keyword id="KW-0808">Transferase</keyword>
<comment type="function">
    <text evidence="1">Catalyzes the phosphorylation of the hydroxyl group of 4-methyl-5-beta-hydroxyethylthiazole (THZ).</text>
</comment>
<comment type="catalytic activity">
    <reaction evidence="1">
        <text>5-(2-hydroxyethyl)-4-methylthiazole + ATP = 4-methyl-5-(2-phosphooxyethyl)-thiazole + ADP + H(+)</text>
        <dbReference type="Rhea" id="RHEA:24212"/>
        <dbReference type="ChEBI" id="CHEBI:15378"/>
        <dbReference type="ChEBI" id="CHEBI:17957"/>
        <dbReference type="ChEBI" id="CHEBI:30616"/>
        <dbReference type="ChEBI" id="CHEBI:58296"/>
        <dbReference type="ChEBI" id="CHEBI:456216"/>
        <dbReference type="EC" id="2.7.1.50"/>
    </reaction>
</comment>
<comment type="cofactor">
    <cofactor evidence="1">
        <name>Mg(2+)</name>
        <dbReference type="ChEBI" id="CHEBI:18420"/>
    </cofactor>
</comment>
<comment type="pathway">
    <text evidence="1">Cofactor biosynthesis; thiamine diphosphate biosynthesis; 4-methyl-5-(2-phosphoethyl)-thiazole from 5-(2-hydroxyethyl)-4-methylthiazole: step 1/1.</text>
</comment>
<comment type="similarity">
    <text evidence="1">Belongs to the Thz kinase family.</text>
</comment>
<dbReference type="EC" id="2.7.1.50" evidence="1"/>
<dbReference type="EMBL" id="CP000936">
    <property type="protein sequence ID" value="ACA36964.1"/>
    <property type="molecule type" value="Genomic_DNA"/>
</dbReference>
<dbReference type="SMR" id="B1IAN9"/>
<dbReference type="KEGG" id="spv:SPH_0804"/>
<dbReference type="HOGENOM" id="CLU_019943_0_2_9"/>
<dbReference type="UniPathway" id="UPA00060">
    <property type="reaction ID" value="UER00139"/>
</dbReference>
<dbReference type="Proteomes" id="UP000002163">
    <property type="component" value="Chromosome"/>
</dbReference>
<dbReference type="GO" id="GO:0005524">
    <property type="term" value="F:ATP binding"/>
    <property type="evidence" value="ECO:0007669"/>
    <property type="project" value="UniProtKB-UniRule"/>
</dbReference>
<dbReference type="GO" id="GO:0004417">
    <property type="term" value="F:hydroxyethylthiazole kinase activity"/>
    <property type="evidence" value="ECO:0007669"/>
    <property type="project" value="UniProtKB-UniRule"/>
</dbReference>
<dbReference type="GO" id="GO:0000287">
    <property type="term" value="F:magnesium ion binding"/>
    <property type="evidence" value="ECO:0007669"/>
    <property type="project" value="UniProtKB-UniRule"/>
</dbReference>
<dbReference type="GO" id="GO:0009228">
    <property type="term" value="P:thiamine biosynthetic process"/>
    <property type="evidence" value="ECO:0007669"/>
    <property type="project" value="UniProtKB-KW"/>
</dbReference>
<dbReference type="GO" id="GO:0009229">
    <property type="term" value="P:thiamine diphosphate biosynthetic process"/>
    <property type="evidence" value="ECO:0007669"/>
    <property type="project" value="UniProtKB-UniRule"/>
</dbReference>
<dbReference type="CDD" id="cd01170">
    <property type="entry name" value="THZ_kinase"/>
    <property type="match status" value="1"/>
</dbReference>
<dbReference type="Gene3D" id="3.40.1190.20">
    <property type="match status" value="1"/>
</dbReference>
<dbReference type="HAMAP" id="MF_00228">
    <property type="entry name" value="Thz_kinase"/>
    <property type="match status" value="1"/>
</dbReference>
<dbReference type="InterPro" id="IPR000417">
    <property type="entry name" value="Hyethyz_kinase"/>
</dbReference>
<dbReference type="InterPro" id="IPR029056">
    <property type="entry name" value="Ribokinase-like"/>
</dbReference>
<dbReference type="NCBIfam" id="NF006830">
    <property type="entry name" value="PRK09355.1"/>
    <property type="match status" value="1"/>
</dbReference>
<dbReference type="NCBIfam" id="TIGR00694">
    <property type="entry name" value="thiM"/>
    <property type="match status" value="1"/>
</dbReference>
<dbReference type="Pfam" id="PF02110">
    <property type="entry name" value="HK"/>
    <property type="match status" value="1"/>
</dbReference>
<dbReference type="PIRSF" id="PIRSF000513">
    <property type="entry name" value="Thz_kinase"/>
    <property type="match status" value="1"/>
</dbReference>
<dbReference type="PRINTS" id="PR01099">
    <property type="entry name" value="HYETHTZKNASE"/>
</dbReference>
<dbReference type="SUPFAM" id="SSF53613">
    <property type="entry name" value="Ribokinase-like"/>
    <property type="match status" value="1"/>
</dbReference>
<proteinExistence type="inferred from homology"/>
<feature type="chain" id="PRO_1000100428" description="Hydroxyethylthiazole kinase 1">
    <location>
        <begin position="1"/>
        <end position="260"/>
    </location>
</feature>
<feature type="binding site" evidence="1">
    <location>
        <position position="39"/>
    </location>
    <ligand>
        <name>substrate</name>
    </ligand>
</feature>
<feature type="binding site" evidence="1">
    <location>
        <position position="115"/>
    </location>
    <ligand>
        <name>ATP</name>
        <dbReference type="ChEBI" id="CHEBI:30616"/>
    </ligand>
</feature>
<feature type="binding site" evidence="1">
    <location>
        <position position="160"/>
    </location>
    <ligand>
        <name>ATP</name>
        <dbReference type="ChEBI" id="CHEBI:30616"/>
    </ligand>
</feature>
<feature type="binding site" evidence="1">
    <location>
        <position position="187"/>
    </location>
    <ligand>
        <name>substrate</name>
    </ligand>
</feature>
<name>THIM1_STRPI</name>